<gene>
    <name type="ordered locus">EF_1203</name>
</gene>
<proteinExistence type="inferred from homology"/>
<reference key="1">
    <citation type="journal article" date="2003" name="Science">
        <title>Role of mobile DNA in the evolution of vancomycin-resistant Enterococcus faecalis.</title>
        <authorList>
            <person name="Paulsen I.T."/>
            <person name="Banerjei L."/>
            <person name="Myers G.S.A."/>
            <person name="Nelson K.E."/>
            <person name="Seshadri R."/>
            <person name="Read T.D."/>
            <person name="Fouts D.E."/>
            <person name="Eisen J.A."/>
            <person name="Gill S.R."/>
            <person name="Heidelberg J.F."/>
            <person name="Tettelin H."/>
            <person name="Dodson R.J."/>
            <person name="Umayam L.A."/>
            <person name="Brinkac L.M."/>
            <person name="Beanan M.J."/>
            <person name="Daugherty S.C."/>
            <person name="DeBoy R.T."/>
            <person name="Durkin S.A."/>
            <person name="Kolonay J.F."/>
            <person name="Madupu R."/>
            <person name="Nelson W.C."/>
            <person name="Vamathevan J.J."/>
            <person name="Tran B."/>
            <person name="Upton J."/>
            <person name="Hansen T."/>
            <person name="Shetty J."/>
            <person name="Khouri H.M."/>
            <person name="Utterback T.R."/>
            <person name="Radune D."/>
            <person name="Ketchum K.A."/>
            <person name="Dougherty B.A."/>
            <person name="Fraser C.M."/>
        </authorList>
    </citation>
    <scope>NUCLEOTIDE SEQUENCE [LARGE SCALE GENOMIC DNA]</scope>
    <source>
        <strain>ATCC 700802 / V583</strain>
    </source>
</reference>
<sequence length="140" mass="15804">MRIMGLDVGSRTVGVAVSDLLGWTAQGIEIIRINEEEENFGFERLGELVKEYEVTKFVVGLPKNMNNSIGPRAEASMAYGDKIQELFQLPVDYQDERLTTVQAERFLVEQADASRAKRKKVIDKLAAVMILQNYLDAHSR</sequence>
<name>YQGF_ENTFA</name>
<organism>
    <name type="scientific">Enterococcus faecalis (strain ATCC 700802 / V583)</name>
    <dbReference type="NCBI Taxonomy" id="226185"/>
    <lineage>
        <taxon>Bacteria</taxon>
        <taxon>Bacillati</taxon>
        <taxon>Bacillota</taxon>
        <taxon>Bacilli</taxon>
        <taxon>Lactobacillales</taxon>
        <taxon>Enterococcaceae</taxon>
        <taxon>Enterococcus</taxon>
    </lineage>
</organism>
<keyword id="KW-0963">Cytoplasm</keyword>
<keyword id="KW-0378">Hydrolase</keyword>
<keyword id="KW-0540">Nuclease</keyword>
<keyword id="KW-1185">Reference proteome</keyword>
<keyword id="KW-0690">Ribosome biogenesis</keyword>
<evidence type="ECO:0000255" key="1">
    <source>
        <dbReference type="HAMAP-Rule" id="MF_00651"/>
    </source>
</evidence>
<comment type="function">
    <text evidence="1">Could be a nuclease involved in processing of the 5'-end of pre-16S rRNA.</text>
</comment>
<comment type="subcellular location">
    <subcellularLocation>
        <location evidence="1">Cytoplasm</location>
    </subcellularLocation>
</comment>
<comment type="similarity">
    <text evidence="1">Belongs to the YqgF nuclease family.</text>
</comment>
<dbReference type="EC" id="3.1.-.-" evidence="1"/>
<dbReference type="EMBL" id="AE016830">
    <property type="protein sequence ID" value="AAO81002.1"/>
    <property type="molecule type" value="Genomic_DNA"/>
</dbReference>
<dbReference type="RefSeq" id="NP_814932.1">
    <property type="nucleotide sequence ID" value="NC_004668.1"/>
</dbReference>
<dbReference type="SMR" id="Q836B2"/>
<dbReference type="STRING" id="226185.EF_1203"/>
<dbReference type="EnsemblBacteria" id="AAO81002">
    <property type="protein sequence ID" value="AAO81002"/>
    <property type="gene ID" value="EF_1203"/>
</dbReference>
<dbReference type="KEGG" id="efa:EF1203"/>
<dbReference type="PATRIC" id="fig|226185.45.peg.2295"/>
<dbReference type="eggNOG" id="COG0816">
    <property type="taxonomic scope" value="Bacteria"/>
</dbReference>
<dbReference type="HOGENOM" id="CLU_098240_2_0_9"/>
<dbReference type="Proteomes" id="UP000001415">
    <property type="component" value="Chromosome"/>
</dbReference>
<dbReference type="GO" id="GO:0005829">
    <property type="term" value="C:cytosol"/>
    <property type="evidence" value="ECO:0007669"/>
    <property type="project" value="TreeGrafter"/>
</dbReference>
<dbReference type="GO" id="GO:0004518">
    <property type="term" value="F:nuclease activity"/>
    <property type="evidence" value="ECO:0007669"/>
    <property type="project" value="UniProtKB-KW"/>
</dbReference>
<dbReference type="GO" id="GO:0000967">
    <property type="term" value="P:rRNA 5'-end processing"/>
    <property type="evidence" value="ECO:0007669"/>
    <property type="project" value="UniProtKB-UniRule"/>
</dbReference>
<dbReference type="CDD" id="cd16964">
    <property type="entry name" value="YqgF"/>
    <property type="match status" value="1"/>
</dbReference>
<dbReference type="FunFam" id="3.30.420.140:FF:000003">
    <property type="entry name" value="Putative pre-16S rRNA nuclease"/>
    <property type="match status" value="1"/>
</dbReference>
<dbReference type="Gene3D" id="3.30.420.140">
    <property type="entry name" value="YqgF/RNase H-like domain"/>
    <property type="match status" value="1"/>
</dbReference>
<dbReference type="HAMAP" id="MF_00651">
    <property type="entry name" value="Nuclease_YqgF"/>
    <property type="match status" value="1"/>
</dbReference>
<dbReference type="InterPro" id="IPR012337">
    <property type="entry name" value="RNaseH-like_sf"/>
</dbReference>
<dbReference type="InterPro" id="IPR005227">
    <property type="entry name" value="YqgF"/>
</dbReference>
<dbReference type="InterPro" id="IPR006641">
    <property type="entry name" value="YqgF/RNaseH-like_dom"/>
</dbReference>
<dbReference type="InterPro" id="IPR037027">
    <property type="entry name" value="YqgF/RNaseH-like_dom_sf"/>
</dbReference>
<dbReference type="NCBIfam" id="TIGR00250">
    <property type="entry name" value="RNAse_H_YqgF"/>
    <property type="match status" value="1"/>
</dbReference>
<dbReference type="PANTHER" id="PTHR33317">
    <property type="entry name" value="POLYNUCLEOTIDYL TRANSFERASE, RIBONUCLEASE H-LIKE SUPERFAMILY PROTEIN"/>
    <property type="match status" value="1"/>
</dbReference>
<dbReference type="PANTHER" id="PTHR33317:SF4">
    <property type="entry name" value="POLYNUCLEOTIDYL TRANSFERASE, RIBONUCLEASE H-LIKE SUPERFAMILY PROTEIN"/>
    <property type="match status" value="1"/>
</dbReference>
<dbReference type="Pfam" id="PF03652">
    <property type="entry name" value="RuvX"/>
    <property type="match status" value="1"/>
</dbReference>
<dbReference type="SMART" id="SM00732">
    <property type="entry name" value="YqgFc"/>
    <property type="match status" value="1"/>
</dbReference>
<dbReference type="SUPFAM" id="SSF53098">
    <property type="entry name" value="Ribonuclease H-like"/>
    <property type="match status" value="1"/>
</dbReference>
<accession>Q836B2</accession>
<protein>
    <recommendedName>
        <fullName evidence="1">Putative pre-16S rRNA nuclease</fullName>
        <ecNumber evidence="1">3.1.-.-</ecNumber>
    </recommendedName>
</protein>
<feature type="chain" id="PRO_0000172063" description="Putative pre-16S rRNA nuclease">
    <location>
        <begin position="1"/>
        <end position="140"/>
    </location>
</feature>